<reference key="1">
    <citation type="submission" date="2004-10" db="EMBL/GenBank/DDBJ databases">
        <authorList>
            <consortium name="NIH - Zebrafish Gene Collection (ZGC) project"/>
        </authorList>
    </citation>
    <scope>NUCLEOTIDE SEQUENCE [LARGE SCALE MRNA]</scope>
    <source>
        <tissue>Olfactory epithelium</tissue>
    </source>
</reference>
<dbReference type="EMBL" id="BC083263">
    <property type="protein sequence ID" value="AAH83263.1"/>
    <property type="molecule type" value="mRNA"/>
</dbReference>
<dbReference type="RefSeq" id="NP_001006061.1">
    <property type="nucleotide sequence ID" value="NM_001006061.1"/>
</dbReference>
<dbReference type="SMR" id="Q5XJN6"/>
<dbReference type="FunCoup" id="Q5XJN6">
    <property type="interactions" value="90"/>
</dbReference>
<dbReference type="STRING" id="7955.ENSDARP00000003379"/>
<dbReference type="PaxDb" id="7955-ENSDARP00000003379"/>
<dbReference type="GeneID" id="450041"/>
<dbReference type="KEGG" id="dre:450041"/>
<dbReference type="AGR" id="ZFIN:ZDB-GENE-041010-163"/>
<dbReference type="CTD" id="29070"/>
<dbReference type="ZFIN" id="ZDB-GENE-041010-163">
    <property type="gene designation" value="cfap263"/>
</dbReference>
<dbReference type="eggNOG" id="ENOG502QU7J">
    <property type="taxonomic scope" value="Eukaryota"/>
</dbReference>
<dbReference type="InParanoid" id="Q5XJN6"/>
<dbReference type="OrthoDB" id="10259713at2759"/>
<dbReference type="PhylomeDB" id="Q5XJN6"/>
<dbReference type="PRO" id="PR:Q5XJN6"/>
<dbReference type="Proteomes" id="UP000000437">
    <property type="component" value="Chromosome 25"/>
</dbReference>
<dbReference type="GO" id="GO:0005930">
    <property type="term" value="C:axoneme"/>
    <property type="evidence" value="ECO:0000318"/>
    <property type="project" value="GO_Central"/>
</dbReference>
<dbReference type="GO" id="GO:0034451">
    <property type="term" value="C:centriolar satellite"/>
    <property type="evidence" value="ECO:0000250"/>
    <property type="project" value="UniProtKB"/>
</dbReference>
<dbReference type="GO" id="GO:0036064">
    <property type="term" value="C:ciliary basal body"/>
    <property type="evidence" value="ECO:0000318"/>
    <property type="project" value="GO_Central"/>
</dbReference>
<dbReference type="GO" id="GO:0032991">
    <property type="term" value="C:protein-containing complex"/>
    <property type="evidence" value="ECO:0000250"/>
    <property type="project" value="UniProtKB"/>
</dbReference>
<dbReference type="GO" id="GO:0060271">
    <property type="term" value="P:cilium assembly"/>
    <property type="evidence" value="ECO:0000250"/>
    <property type="project" value="UniProtKB"/>
</dbReference>
<dbReference type="InterPro" id="IPR051885">
    <property type="entry name" value="CC_domain-Cilium_Assoc"/>
</dbReference>
<dbReference type="InterPro" id="IPR025254">
    <property type="entry name" value="CCDC113/CCDC96_CC"/>
</dbReference>
<dbReference type="PANTHER" id="PTHR15654:SF2">
    <property type="entry name" value="COILED-COIL DOMAIN-CONTAINING PROTEIN 113"/>
    <property type="match status" value="1"/>
</dbReference>
<dbReference type="PANTHER" id="PTHR15654">
    <property type="entry name" value="COILED-COIL DOMAIN-CONTAINING PROTEIN 113-RELATED"/>
    <property type="match status" value="1"/>
</dbReference>
<dbReference type="Pfam" id="PF13870">
    <property type="entry name" value="CCDC113_CCDC96_CC"/>
    <property type="match status" value="1"/>
</dbReference>
<organism>
    <name type="scientific">Danio rerio</name>
    <name type="common">Zebrafish</name>
    <name type="synonym">Brachydanio rerio</name>
    <dbReference type="NCBI Taxonomy" id="7955"/>
    <lineage>
        <taxon>Eukaryota</taxon>
        <taxon>Metazoa</taxon>
        <taxon>Chordata</taxon>
        <taxon>Craniata</taxon>
        <taxon>Vertebrata</taxon>
        <taxon>Euteleostomi</taxon>
        <taxon>Actinopterygii</taxon>
        <taxon>Neopterygii</taxon>
        <taxon>Teleostei</taxon>
        <taxon>Ostariophysi</taxon>
        <taxon>Cypriniformes</taxon>
        <taxon>Danionidae</taxon>
        <taxon>Danioninae</taxon>
        <taxon>Danio</taxon>
    </lineage>
</organism>
<sequence>MAEMTEDSKSDTARKQLVELVDLNLTSNAALNAEIDLFDRYISRLDLRTFETVWKWQNLSTEKIPGRKAKVRTPGRQQLLTLEQKCVVAKSVYKKMIEDLKIAKIHSEKQLDNYKATLEEADIHLAEIKKERSHFKRNIVEELEDKKSMTMSAEKVMRYIEDKIKAKDILIEKLHRKNSALLTHKKKQQAQLRQQEEMAEGVTVLDFELLKFENIRFRKQLDEQNLKQVNLKLLAVKTLQTLNSNKEKLHILTNESEMLSSDTALRTKLLVKIEEETEQAEEERHKAEALNRKLRDQLADFHVPHVLQYIKLKESHGQLQKSVREWERKVEIAEMALKTYTKSWDKLRFAAGAGLVPI</sequence>
<comment type="function">
    <text evidence="1 2">Component of centriolar satellites contributing to primary cilium formation (By similarity). In complex with CFAP263, acts as a regulator of ciliary beating that connects radial spoke 3 (RS3) to the inner dynein arm (IDA) and the nexin-dynein regulatory complex (N-DRC). The complex is positioned parallel to N-DRC and forms a connection between the arch at the base of RS3, the IDA tail and N-DRC (By similarity).</text>
</comment>
<comment type="subunit">
    <text evidence="1 2">Forms a complex with CFAP184; the interaction is required for functional activity in cilia (By similarity). Interacts with HAP1 and PCM1 (By similarity).</text>
</comment>
<comment type="subcellular location">
    <subcellularLocation>
        <location evidence="2">Cytoplasm</location>
        <location evidence="2">Cytoskeleton</location>
        <location evidence="2">Microtubule organizing center</location>
        <location evidence="2">Centrosome</location>
        <location evidence="2">Centriolar satellite</location>
    </subcellularLocation>
    <subcellularLocation>
        <location evidence="1">Cell projection</location>
        <location evidence="1">Cilium</location>
    </subcellularLocation>
    <text evidence="1 2">Colocalized with HAP1 at centriolar satellites. Centriolar satellite localization requires PCM1 (By similarity). Localizes at cilium but not at the ciliary tips (By similarity).</text>
</comment>
<comment type="similarity">
    <text evidence="4">Belongs to the CFAP263 family.</text>
</comment>
<name>CF263_DANRE</name>
<protein>
    <recommendedName>
        <fullName>Cilia- and flagella-associated protein 263</fullName>
    </recommendedName>
</protein>
<feature type="chain" id="PRO_0000279401" description="Cilia- and flagella-associated protein 263">
    <location>
        <begin position="1"/>
        <end position="358"/>
    </location>
</feature>
<feature type="coiled-coil region" evidence="3">
    <location>
        <begin position="93"/>
        <end position="138"/>
    </location>
</feature>
<feature type="coiled-coil region" evidence="3">
    <location>
        <begin position="176"/>
        <end position="200"/>
    </location>
</feature>
<feature type="coiled-coil region" evidence="3">
    <location>
        <begin position="266"/>
        <end position="343"/>
    </location>
</feature>
<accession>Q5XJN6</accession>
<keyword id="KW-0966">Cell projection</keyword>
<keyword id="KW-0970">Cilium biogenesis/degradation</keyword>
<keyword id="KW-0175">Coiled coil</keyword>
<keyword id="KW-0963">Cytoplasm</keyword>
<keyword id="KW-0206">Cytoskeleton</keyword>
<keyword id="KW-1185">Reference proteome</keyword>
<gene>
    <name type="primary">cfap263</name>
    <name type="synonym">ccdc113</name>
    <name type="ORF">zgc:101745</name>
</gene>
<evidence type="ECO:0000250" key="1">
    <source>
        <dbReference type="UniProtKB" id="Q22KK0"/>
    </source>
</evidence>
<evidence type="ECO:0000250" key="2">
    <source>
        <dbReference type="UniProtKB" id="Q9H0I3"/>
    </source>
</evidence>
<evidence type="ECO:0000255" key="3"/>
<evidence type="ECO:0000305" key="4"/>
<proteinExistence type="evidence at transcript level"/>